<evidence type="ECO:0000250" key="1"/>
<evidence type="ECO:0000250" key="2">
    <source>
        <dbReference type="UniProtKB" id="O35789"/>
    </source>
</evidence>
<evidence type="ECO:0000250" key="3">
    <source>
        <dbReference type="UniProtKB" id="Q9P2W7"/>
    </source>
</evidence>
<evidence type="ECO:0000255" key="4"/>
<evidence type="ECO:0000305" key="5"/>
<proteinExistence type="evidence at transcript level"/>
<accession>Q5CB04</accession>
<gene>
    <name evidence="3" type="primary">B3GAT1</name>
</gene>
<name>B3GA1_PANTR</name>
<organism>
    <name type="scientific">Pan troglodytes</name>
    <name type="common">Chimpanzee</name>
    <dbReference type="NCBI Taxonomy" id="9598"/>
    <lineage>
        <taxon>Eukaryota</taxon>
        <taxon>Metazoa</taxon>
        <taxon>Chordata</taxon>
        <taxon>Craniata</taxon>
        <taxon>Vertebrata</taxon>
        <taxon>Euteleostomi</taxon>
        <taxon>Mammalia</taxon>
        <taxon>Eutheria</taxon>
        <taxon>Euarchontoglires</taxon>
        <taxon>Primates</taxon>
        <taxon>Haplorrhini</taxon>
        <taxon>Catarrhini</taxon>
        <taxon>Hominidae</taxon>
        <taxon>Pan</taxon>
    </lineage>
</organism>
<protein>
    <recommendedName>
        <fullName evidence="3">Galactosylgalactosylxylosylprotein 3-beta-glucuronosyltransferase 1</fullName>
        <ecNumber evidence="2">2.4.1.135</ecNumber>
    </recommendedName>
    <alternativeName>
        <fullName>Beta-1,3-glucuronyltransferase 1</fullName>
    </alternativeName>
    <alternativeName>
        <fullName>Glucuronosyltransferase P</fullName>
        <shortName evidence="2">GlcAT-P</shortName>
    </alternativeName>
    <alternativeName>
        <fullName>UDP-GlcUA:glycoprotein beta-1,3-glucuronyltransferase</fullName>
        <shortName>GlcUAT-P</shortName>
    </alternativeName>
</protein>
<dbReference type="EC" id="2.4.1.135" evidence="2"/>
<dbReference type="EMBL" id="AJ888974">
    <property type="protein sequence ID" value="CAI62039.1"/>
    <property type="molecule type" value="mRNA"/>
</dbReference>
<dbReference type="RefSeq" id="NP_001026790.1">
    <property type="nucleotide sequence ID" value="NM_001031619.1"/>
</dbReference>
<dbReference type="SMR" id="Q5CB04"/>
<dbReference type="STRING" id="9598.ENSPTRP00000054150"/>
<dbReference type="CAZy" id="GT43">
    <property type="family name" value="Glycosyltransferase Family 43"/>
</dbReference>
<dbReference type="GlyCosmos" id="Q5CB04">
    <property type="glycosylation" value="3 sites, No reported glycans"/>
</dbReference>
<dbReference type="PaxDb" id="9598-ENSPTRP00000054150"/>
<dbReference type="GeneID" id="466859"/>
<dbReference type="KEGG" id="ptr:466859"/>
<dbReference type="CTD" id="27087"/>
<dbReference type="eggNOG" id="KOG1476">
    <property type="taxonomic scope" value="Eukaryota"/>
</dbReference>
<dbReference type="InParanoid" id="Q5CB04"/>
<dbReference type="UniPathway" id="UPA00378"/>
<dbReference type="Proteomes" id="UP000002277">
    <property type="component" value="Unplaced"/>
</dbReference>
<dbReference type="GO" id="GO:0005789">
    <property type="term" value="C:endoplasmic reticulum membrane"/>
    <property type="evidence" value="ECO:0000250"/>
    <property type="project" value="UniProtKB"/>
</dbReference>
<dbReference type="GO" id="GO:0005576">
    <property type="term" value="C:extracellular region"/>
    <property type="evidence" value="ECO:0007669"/>
    <property type="project" value="UniProtKB-SubCell"/>
</dbReference>
<dbReference type="GO" id="GO:0000139">
    <property type="term" value="C:Golgi membrane"/>
    <property type="evidence" value="ECO:0000250"/>
    <property type="project" value="UniProtKB"/>
</dbReference>
<dbReference type="GO" id="GO:0015018">
    <property type="term" value="F:galactosylgalactosylxylosylprotein 3-beta-glucuronosyltransferase activity"/>
    <property type="evidence" value="ECO:0000250"/>
    <property type="project" value="UniProtKB"/>
</dbReference>
<dbReference type="GO" id="GO:0046872">
    <property type="term" value="F:metal ion binding"/>
    <property type="evidence" value="ECO:0007669"/>
    <property type="project" value="UniProtKB-KW"/>
</dbReference>
<dbReference type="GO" id="GO:0005975">
    <property type="term" value="P:carbohydrate metabolic process"/>
    <property type="evidence" value="ECO:0000318"/>
    <property type="project" value="GO_Central"/>
</dbReference>
<dbReference type="GO" id="GO:0050650">
    <property type="term" value="P:chondroitin sulfate proteoglycan biosynthetic process"/>
    <property type="evidence" value="ECO:0000318"/>
    <property type="project" value="GO_Central"/>
</dbReference>
<dbReference type="GO" id="GO:0006486">
    <property type="term" value="P:protein glycosylation"/>
    <property type="evidence" value="ECO:0007669"/>
    <property type="project" value="UniProtKB-UniPathway"/>
</dbReference>
<dbReference type="CDD" id="cd00218">
    <property type="entry name" value="GlcAT-I"/>
    <property type="match status" value="1"/>
</dbReference>
<dbReference type="FunFam" id="3.90.550.10:FF:000010">
    <property type="entry name" value="Galactosylgalactosylxylosylprotein 3-beta-glucuronosyltransferase"/>
    <property type="match status" value="1"/>
</dbReference>
<dbReference type="Gene3D" id="3.90.550.10">
    <property type="entry name" value="Spore Coat Polysaccharide Biosynthesis Protein SpsA, Chain A"/>
    <property type="match status" value="1"/>
</dbReference>
<dbReference type="InterPro" id="IPR005027">
    <property type="entry name" value="Glyco_trans_43"/>
</dbReference>
<dbReference type="InterPro" id="IPR029044">
    <property type="entry name" value="Nucleotide-diphossugar_trans"/>
</dbReference>
<dbReference type="PANTHER" id="PTHR10896:SF21">
    <property type="entry name" value="GALACTOSYLGALACTOSYLXYLOSYLPROTEIN 3-BETA-GLUCURONOSYLTRANSFERASE 1"/>
    <property type="match status" value="1"/>
</dbReference>
<dbReference type="PANTHER" id="PTHR10896">
    <property type="entry name" value="GALACTOSYLGALACTOSYLXYLOSYLPROTEIN 3-BETA-GLUCURONOSYLTRANSFERASE BETA-1,3-GLUCURONYLTRANSFERASE"/>
    <property type="match status" value="1"/>
</dbReference>
<dbReference type="Pfam" id="PF03360">
    <property type="entry name" value="Glyco_transf_43"/>
    <property type="match status" value="1"/>
</dbReference>
<dbReference type="SUPFAM" id="SSF53448">
    <property type="entry name" value="Nucleotide-diphospho-sugar transferases"/>
    <property type="match status" value="1"/>
</dbReference>
<feature type="chain" id="PRO_0000195169" description="Galactosylgalactosylxylosylprotein 3-beta-glucuronosyltransferase 1">
    <location>
        <begin position="1"/>
        <end position="332"/>
    </location>
</feature>
<feature type="topological domain" description="Cytoplasmic" evidence="4">
    <location>
        <begin position="1"/>
        <end position="6"/>
    </location>
</feature>
<feature type="transmembrane region" description="Helical; Signal-anchor for type II membrane protein" evidence="4">
    <location>
        <begin position="7"/>
        <end position="27"/>
    </location>
</feature>
<feature type="topological domain" description="Lumenal" evidence="4">
    <location>
        <begin position="28"/>
        <end position="332"/>
    </location>
</feature>
<feature type="region of interest" description="Essential for transport from endoplasmic reticulum to Golgi apparatus and interaction with SAR1A" evidence="2">
    <location>
        <begin position="3"/>
        <end position="5"/>
    </location>
</feature>
<feature type="region of interest" description="Interaction with galactose moiety of substrate glycoprotein" evidence="1">
    <location>
        <begin position="243"/>
        <end position="252"/>
    </location>
</feature>
<feature type="active site" description="Proton donor/acceptor" evidence="1">
    <location>
        <position position="282"/>
    </location>
</feature>
<feature type="binding site" evidence="1">
    <location>
        <begin position="91"/>
        <end position="93"/>
    </location>
    <ligand>
        <name>UDP-alpha-D-glucuronate</name>
        <dbReference type="ChEBI" id="CHEBI:58052"/>
    </ligand>
</feature>
<feature type="binding site" evidence="1">
    <location>
        <position position="122"/>
    </location>
    <ligand>
        <name>UDP-alpha-D-glucuronate</name>
        <dbReference type="ChEBI" id="CHEBI:58052"/>
    </ligand>
</feature>
<feature type="binding site" evidence="1">
    <location>
        <position position="165"/>
    </location>
    <ligand>
        <name>UDP-alpha-D-glucuronate</name>
        <dbReference type="ChEBI" id="CHEBI:58052"/>
    </ligand>
</feature>
<feature type="binding site" evidence="1">
    <location>
        <position position="170"/>
    </location>
    <ligand>
        <name>UDP-alpha-D-glucuronate</name>
        <dbReference type="ChEBI" id="CHEBI:58052"/>
    </ligand>
</feature>
<feature type="binding site" evidence="1">
    <location>
        <begin position="195"/>
        <end position="197"/>
    </location>
    <ligand>
        <name>UDP-alpha-D-glucuronate</name>
        <dbReference type="ChEBI" id="CHEBI:58052"/>
    </ligand>
</feature>
<feature type="binding site" evidence="1">
    <location>
        <position position="197"/>
    </location>
    <ligand>
        <name>Mn(2+)</name>
        <dbReference type="ChEBI" id="CHEBI:29035"/>
    </ligand>
</feature>
<feature type="binding site" evidence="1">
    <location>
        <begin position="309"/>
        <end position="311"/>
    </location>
    <ligand>
        <name>UDP-alpha-D-glucuronate</name>
        <dbReference type="ChEBI" id="CHEBI:58052"/>
    </ligand>
</feature>
<feature type="site" description="Interaction with galactose moiety of substrate glycoprotein" evidence="1">
    <location>
        <position position="226"/>
    </location>
</feature>
<feature type="site" description="Interaction with galactose moiety of substrate glycoprotein" evidence="1">
    <location>
        <position position="319"/>
    </location>
</feature>
<feature type="modified residue" description="Phosphothreonine" evidence="2">
    <location>
        <position position="103"/>
    </location>
</feature>
<feature type="modified residue" description="Phosphothreonine" evidence="2">
    <location>
        <position position="108"/>
    </location>
</feature>
<feature type="glycosylation site" description="N-linked (GlcNAc...) asparagine" evidence="4">
    <location>
        <position position="140"/>
    </location>
</feature>
<feature type="glycosylation site" description="N-linked (GlcNAc...) asparagine" evidence="4">
    <location>
        <position position="184"/>
    </location>
</feature>
<feature type="glycosylation site" description="N-linked (GlcNAc...) asparagine" evidence="4">
    <location>
        <position position="301"/>
    </location>
</feature>
<comment type="function">
    <text evidence="2">Involved in the biosynthesis of L2/HNK-1 carbohydrate epitope on glycoproteins. Can also play a role in glycosaminoglycan biosynthesis. Substrates include asialo-orosomucoid (ASOR), asialo-fetuin, and asialo-neural cell adhesion molecule. Requires sphingomyelin for activity: stearoyl-sphingomyelin was the most effective, followed by palmitoyl-sphingomyelin and lignoceroyl-sphingomyelin. Activity was demonstrated only for sphingomyelin with a saturated fatty acid and not for that with an unsaturated fatty acid, regardless of the length of the acyl group.</text>
</comment>
<comment type="catalytic activity">
    <reaction evidence="2">
        <text>3-O-(beta-D-galactosyl-(1-&gt;3)-beta-D-galactosyl-(1-&gt;4)-beta-D-xylosyl)-L-seryl-[protein] + UDP-alpha-D-glucuronate = 3-O-(beta-D-GlcA-(1-&gt;3)-beta-D-Gal-(1-&gt;3)-beta-D-Gal-(1-&gt;4)-beta-D-Xyl)-L-seryl-[protein] + UDP + H(+)</text>
        <dbReference type="Rhea" id="RHEA:24168"/>
        <dbReference type="Rhea" id="RHEA-COMP:12571"/>
        <dbReference type="Rhea" id="RHEA-COMP:12573"/>
        <dbReference type="ChEBI" id="CHEBI:15378"/>
        <dbReference type="ChEBI" id="CHEBI:58052"/>
        <dbReference type="ChEBI" id="CHEBI:58223"/>
        <dbReference type="ChEBI" id="CHEBI:132090"/>
        <dbReference type="ChEBI" id="CHEBI:132093"/>
        <dbReference type="EC" id="2.4.1.135"/>
    </reaction>
</comment>
<comment type="cofactor">
    <cofactor evidence="2">
        <name>Mn(2+)</name>
        <dbReference type="ChEBI" id="CHEBI:29035"/>
    </cofactor>
</comment>
<comment type="pathway">
    <text>Protein modification; protein glycosylation.</text>
</comment>
<comment type="subunit">
    <text evidence="2">Homodimer. Interacts with SAR1A.</text>
</comment>
<comment type="subcellular location">
    <subcellularLocation>
        <location evidence="2">Golgi apparatus membrane</location>
        <topology evidence="2">Single-pass type II membrane protein</topology>
    </subcellularLocation>
    <subcellularLocation>
        <location evidence="2">Secreted</location>
    </subcellularLocation>
</comment>
<comment type="PTM">
    <text evidence="2">The soluble form derives from the membrane form by proteolytic processing.</text>
</comment>
<comment type="similarity">
    <text evidence="5">Belongs to the glycosyltransferase 43 family.</text>
</comment>
<reference key="1">
    <citation type="submission" date="2005-03" db="EMBL/GenBank/DDBJ databases">
        <title>Phylogeny of beta3-glucuronyltransferases.</title>
        <authorList>
            <person name="Ouzzine M."/>
            <person name="Magdalou J."/>
            <person name="Fournel-Gigleux S."/>
            <person name="Mollicone R."/>
            <person name="Oriol R."/>
        </authorList>
    </citation>
    <scope>NUCLEOTIDE SEQUENCE [MRNA]</scope>
</reference>
<sequence>MPKRRDILAIVLIVLPWTLLITVWHQSTLAPLLAVHKDEGSDPRRETPPGADPREYCMSDRDIVEVVRTEYVYTRPPPWSDTLPTIHVVTPTYSRPVQKAELTRMANTLLHVPNLHWLVVEDAPRRTPLTARLLRDTGLNYTHLHVETPRNYKLRGDARDPRIPRGTMQRNLALRWLRETFPRNSSQPGVVYFADDDNPYSLELFQKVTRRVSVWPVAFVGGLRYEAPRVNGAGKVVGWKTVFDPHRPFAIDMAGFAVNLRLILQRSQAYFKLRGVKGGYQESSLLRELVTLNDLEPKAANCTKILVWHTRTEKPVLVNEGKKGFTDPSVEI</sequence>
<keyword id="KW-0325">Glycoprotein</keyword>
<keyword id="KW-0333">Golgi apparatus</keyword>
<keyword id="KW-0464">Manganese</keyword>
<keyword id="KW-0472">Membrane</keyword>
<keyword id="KW-0479">Metal-binding</keyword>
<keyword id="KW-0597">Phosphoprotein</keyword>
<keyword id="KW-1185">Reference proteome</keyword>
<keyword id="KW-0964">Secreted</keyword>
<keyword id="KW-0735">Signal-anchor</keyword>
<keyword id="KW-0808">Transferase</keyword>
<keyword id="KW-0812">Transmembrane</keyword>
<keyword id="KW-1133">Transmembrane helix</keyword>